<gene>
    <name type="ORF">FV3-028R</name>
</gene>
<reference key="1">
    <citation type="journal article" date="2004" name="Virology">
        <title>Comparative genomic analyses of frog virus 3, type species of the genus Ranavirus (family Iridoviridae).</title>
        <authorList>
            <person name="Tan W.G."/>
            <person name="Barkman T.J."/>
            <person name="Gregory Chinchar V."/>
            <person name="Essani K."/>
        </authorList>
    </citation>
    <scope>NUCLEOTIDE SEQUENCE [LARGE SCALE GENOMIC DNA]</scope>
</reference>
<accession>Q6GZU8</accession>
<organism>
    <name type="scientific">Frog virus 3 (isolate Goorha)</name>
    <name type="common">FV-3</name>
    <dbReference type="NCBI Taxonomy" id="654924"/>
    <lineage>
        <taxon>Viruses</taxon>
        <taxon>Varidnaviria</taxon>
        <taxon>Bamfordvirae</taxon>
        <taxon>Nucleocytoviricota</taxon>
        <taxon>Megaviricetes</taxon>
        <taxon>Pimascovirales</taxon>
        <taxon>Iridoviridae</taxon>
        <taxon>Alphairidovirinae</taxon>
        <taxon>Ranavirus</taxon>
        <taxon>Frog virus 3</taxon>
    </lineage>
</organism>
<feature type="chain" id="PRO_0000410501" description="Uncharacterized protein 028R">
    <location>
        <begin position="1"/>
        <end position="162"/>
    </location>
</feature>
<organismHost>
    <name type="scientific">Dryophytes versicolor</name>
    <name type="common">chameleon treefrog</name>
    <dbReference type="NCBI Taxonomy" id="30343"/>
</organismHost>
<organismHost>
    <name type="scientific">Lithobates pipiens</name>
    <name type="common">Northern leopard frog</name>
    <name type="synonym">Rana pipiens</name>
    <dbReference type="NCBI Taxonomy" id="8404"/>
</organismHost>
<organismHost>
    <name type="scientific">Lithobates sylvaticus</name>
    <name type="common">Wood frog</name>
    <name type="synonym">Rana sylvatica</name>
    <dbReference type="NCBI Taxonomy" id="45438"/>
</organismHost>
<organismHost>
    <name type="scientific">Notophthalmus viridescens</name>
    <name type="common">Eastern newt</name>
    <name type="synonym">Triturus viridescens</name>
    <dbReference type="NCBI Taxonomy" id="8316"/>
</organismHost>
<dbReference type="EMBL" id="AY548484">
    <property type="protein sequence ID" value="AAT09687.1"/>
    <property type="molecule type" value="Genomic_DNA"/>
</dbReference>
<dbReference type="RefSeq" id="YP_031606.1">
    <property type="nucleotide sequence ID" value="NC_005946.1"/>
</dbReference>
<dbReference type="SMR" id="Q6GZU8"/>
<dbReference type="KEGG" id="vg:2947748"/>
<dbReference type="Proteomes" id="UP000008770">
    <property type="component" value="Segment"/>
</dbReference>
<dbReference type="InterPro" id="IPR035913">
    <property type="entry name" value="RPB5-like_sf"/>
</dbReference>
<dbReference type="SUPFAM" id="SSF55287">
    <property type="entry name" value="RPB5-like RNA polymerase subunit"/>
    <property type="match status" value="1"/>
</dbReference>
<proteinExistence type="predicted"/>
<keyword id="KW-1185">Reference proteome</keyword>
<name>028R_FRG3G</name>
<sequence>MDPNVLKNLSLMLSRRAGVSGGEPPRMIEWPEYGQRSEPCGSQTVWYVDRPVGAPFIKAFASEVEERGGGILIHAGKVTFDSAKKLAAMKEVQVFDVKYFSFDLMAVVPEHSLWKRPGDKGYPEKTAQSFPKIMASDPVCRYHGFRPRDLVHVKPHDVYIVC</sequence>
<protein>
    <recommendedName>
        <fullName>Uncharacterized protein 028R</fullName>
    </recommendedName>
</protein>